<organism>
    <name type="scientific">Homo sapiens</name>
    <name type="common">Human</name>
    <dbReference type="NCBI Taxonomy" id="9606"/>
    <lineage>
        <taxon>Eukaryota</taxon>
        <taxon>Metazoa</taxon>
        <taxon>Chordata</taxon>
        <taxon>Craniata</taxon>
        <taxon>Vertebrata</taxon>
        <taxon>Euteleostomi</taxon>
        <taxon>Mammalia</taxon>
        <taxon>Eutheria</taxon>
        <taxon>Euarchontoglires</taxon>
        <taxon>Primates</taxon>
        <taxon>Haplorrhini</taxon>
        <taxon>Catarrhini</taxon>
        <taxon>Hominidae</taxon>
        <taxon>Homo</taxon>
    </lineage>
</organism>
<dbReference type="EMBL" id="AK074084">
    <property type="protein sequence ID" value="BAB84910.1"/>
    <property type="status" value="ALT_SEQ"/>
    <property type="molecule type" value="mRNA"/>
</dbReference>
<dbReference type="EMBL" id="AL833833">
    <property type="protein sequence ID" value="CAD38693.1"/>
    <property type="molecule type" value="mRNA"/>
</dbReference>
<dbReference type="EMBL" id="AP001152">
    <property type="status" value="NOT_ANNOTATED_CDS"/>
    <property type="molecule type" value="Genomic_DNA"/>
</dbReference>
<dbReference type="EMBL" id="AP002376">
    <property type="status" value="NOT_ANNOTATED_CDS"/>
    <property type="molecule type" value="Genomic_DNA"/>
</dbReference>
<dbReference type="EMBL" id="BX648729">
    <property type="protein sequence ID" value="CAH56180.1"/>
    <property type="molecule type" value="mRNA"/>
</dbReference>
<dbReference type="EMBL" id="BC014126">
    <property type="protein sequence ID" value="AAH14126.1"/>
    <property type="molecule type" value="mRNA"/>
</dbReference>
<dbReference type="EMBL" id="BC037539">
    <property type="protein sequence ID" value="AAH37539.1"/>
    <property type="molecule type" value="mRNA"/>
</dbReference>
<dbReference type="EMBL" id="AF453742">
    <property type="protein sequence ID" value="AAL49764.1"/>
    <property type="molecule type" value="mRNA"/>
</dbReference>
<dbReference type="CCDS" id="CCDS44712.1">
    <molecule id="Q8IY63-1"/>
</dbReference>
<dbReference type="CCDS" id="CCDS73368.1">
    <molecule id="Q8IY63-2"/>
</dbReference>
<dbReference type="RefSeq" id="NP_001287936.1">
    <molecule id="Q8IY63-2"/>
    <property type="nucleotide sequence ID" value="NM_001301007.2"/>
</dbReference>
<dbReference type="RefSeq" id="NP_570899.1">
    <molecule id="Q8IY63-1"/>
    <property type="nucleotide sequence ID" value="NM_130847.3"/>
</dbReference>
<dbReference type="SMR" id="Q8IY63"/>
<dbReference type="BioGRID" id="127559">
    <property type="interactions" value="98"/>
</dbReference>
<dbReference type="CORUM" id="Q8IY63"/>
<dbReference type="DIP" id="DIP-50682N"/>
<dbReference type="FunCoup" id="Q8IY63">
    <property type="interactions" value="564"/>
</dbReference>
<dbReference type="IntAct" id="Q8IY63">
    <property type="interactions" value="42"/>
</dbReference>
<dbReference type="MINT" id="Q8IY63"/>
<dbReference type="STRING" id="9606.ENSP00000387739"/>
<dbReference type="GlyGen" id="Q8IY63">
    <property type="glycosylation" value="1 site"/>
</dbReference>
<dbReference type="iPTMnet" id="Q8IY63"/>
<dbReference type="PhosphoSitePlus" id="Q8IY63"/>
<dbReference type="BioMuta" id="AMOTL1"/>
<dbReference type="DMDM" id="74728292"/>
<dbReference type="jPOST" id="Q8IY63"/>
<dbReference type="MassIVE" id="Q8IY63"/>
<dbReference type="PaxDb" id="9606-ENSP00000387739"/>
<dbReference type="PeptideAtlas" id="Q8IY63"/>
<dbReference type="ProteomicsDB" id="71115">
    <molecule id="Q8IY63-1"/>
</dbReference>
<dbReference type="ProteomicsDB" id="71116">
    <molecule id="Q8IY63-2"/>
</dbReference>
<dbReference type="Pumba" id="Q8IY63"/>
<dbReference type="Antibodypedia" id="654">
    <property type="antibodies" value="136 antibodies from 26 providers"/>
</dbReference>
<dbReference type="DNASU" id="154810"/>
<dbReference type="Ensembl" id="ENST00000317829.12">
    <molecule id="Q8IY63-2"/>
    <property type="protein sequence ID" value="ENSP00000320968.8"/>
    <property type="gene ID" value="ENSG00000166025.18"/>
</dbReference>
<dbReference type="Ensembl" id="ENST00000433060.3">
    <molecule id="Q8IY63-1"/>
    <property type="protein sequence ID" value="ENSP00000387739.2"/>
    <property type="gene ID" value="ENSG00000166025.18"/>
</dbReference>
<dbReference type="GeneID" id="154810"/>
<dbReference type="KEGG" id="hsa:154810"/>
<dbReference type="MANE-Select" id="ENST00000433060.3">
    <property type="protein sequence ID" value="ENSP00000387739.2"/>
    <property type="RefSeq nucleotide sequence ID" value="NM_130847.3"/>
    <property type="RefSeq protein sequence ID" value="NP_570899.1"/>
</dbReference>
<dbReference type="UCSC" id="uc001pfb.4">
    <molecule id="Q8IY63-1"/>
    <property type="organism name" value="human"/>
</dbReference>
<dbReference type="AGR" id="HGNC:17811"/>
<dbReference type="CTD" id="154810"/>
<dbReference type="DisGeNET" id="154810"/>
<dbReference type="GeneCards" id="AMOTL1"/>
<dbReference type="HGNC" id="HGNC:17811">
    <property type="gene designation" value="AMOTL1"/>
</dbReference>
<dbReference type="HPA" id="ENSG00000166025">
    <property type="expression patterns" value="Tissue enhanced (skeletal)"/>
</dbReference>
<dbReference type="MalaCards" id="AMOTL1"/>
<dbReference type="MIM" id="614657">
    <property type="type" value="gene"/>
</dbReference>
<dbReference type="neXtProt" id="NX_Q8IY63"/>
<dbReference type="OpenTargets" id="ENSG00000166025"/>
<dbReference type="Orphanet" id="660021">
    <property type="disease" value="Orofacial clefting-cardiac anomalies-facial dysmorphism syndrome"/>
</dbReference>
<dbReference type="PharmGKB" id="PA24774"/>
<dbReference type="VEuPathDB" id="HostDB:ENSG00000166025"/>
<dbReference type="eggNOG" id="ENOG502QVI5">
    <property type="taxonomic scope" value="Eukaryota"/>
</dbReference>
<dbReference type="GeneTree" id="ENSGT00940000160158"/>
<dbReference type="HOGENOM" id="CLU_009937_1_0_1"/>
<dbReference type="InParanoid" id="Q8IY63"/>
<dbReference type="OMA" id="GMPEYNA"/>
<dbReference type="OrthoDB" id="5974715at2759"/>
<dbReference type="PAN-GO" id="Q8IY63">
    <property type="GO annotations" value="8 GO annotations based on evolutionary models"/>
</dbReference>
<dbReference type="PhylomeDB" id="Q8IY63"/>
<dbReference type="TreeFam" id="TF333368"/>
<dbReference type="PathwayCommons" id="Q8IY63"/>
<dbReference type="Reactome" id="R-HSA-2028269">
    <property type="pathway name" value="Signaling by Hippo"/>
</dbReference>
<dbReference type="SignaLink" id="Q8IY63"/>
<dbReference type="SIGNOR" id="Q8IY63"/>
<dbReference type="BioGRID-ORCS" id="154810">
    <property type="hits" value="14 hits in 1159 CRISPR screens"/>
</dbReference>
<dbReference type="ChiTaRS" id="AMOTL1">
    <property type="organism name" value="human"/>
</dbReference>
<dbReference type="GeneWiki" id="AMOTL1"/>
<dbReference type="GenomeRNAi" id="154810"/>
<dbReference type="Pharos" id="Q8IY63">
    <property type="development level" value="Tbio"/>
</dbReference>
<dbReference type="PRO" id="PR:Q8IY63"/>
<dbReference type="Proteomes" id="UP000005640">
    <property type="component" value="Chromosome 11"/>
</dbReference>
<dbReference type="RNAct" id="Q8IY63">
    <property type="molecule type" value="protein"/>
</dbReference>
<dbReference type="Bgee" id="ENSG00000166025">
    <property type="expression patterns" value="Expressed in tibialis anterior and 190 other cell types or tissues"/>
</dbReference>
<dbReference type="ExpressionAtlas" id="Q8IY63">
    <property type="expression patterns" value="baseline and differential"/>
</dbReference>
<dbReference type="GO" id="GO:0005923">
    <property type="term" value="C:bicellular tight junction"/>
    <property type="evidence" value="ECO:0000314"/>
    <property type="project" value="MGI"/>
</dbReference>
<dbReference type="GO" id="GO:0031410">
    <property type="term" value="C:cytoplasmic vesicle"/>
    <property type="evidence" value="ECO:0000318"/>
    <property type="project" value="GO_Central"/>
</dbReference>
<dbReference type="GO" id="GO:0005829">
    <property type="term" value="C:cytosol"/>
    <property type="evidence" value="ECO:0000304"/>
    <property type="project" value="Reactome"/>
</dbReference>
<dbReference type="GO" id="GO:0005886">
    <property type="term" value="C:plasma membrane"/>
    <property type="evidence" value="ECO:0000318"/>
    <property type="project" value="GO_Central"/>
</dbReference>
<dbReference type="GO" id="GO:0042802">
    <property type="term" value="F:identical protein binding"/>
    <property type="evidence" value="ECO:0000314"/>
    <property type="project" value="MGI"/>
</dbReference>
<dbReference type="GO" id="GO:0030036">
    <property type="term" value="P:actin cytoskeleton organization"/>
    <property type="evidence" value="ECO:0000318"/>
    <property type="project" value="GO_Central"/>
</dbReference>
<dbReference type="GO" id="GO:0001525">
    <property type="term" value="P:angiogenesis"/>
    <property type="evidence" value="ECO:0000318"/>
    <property type="project" value="GO_Central"/>
</dbReference>
<dbReference type="GO" id="GO:0003365">
    <property type="term" value="P:establishment of cell polarity involved in ameboidal cell migration"/>
    <property type="evidence" value="ECO:0000318"/>
    <property type="project" value="GO_Central"/>
</dbReference>
<dbReference type="GO" id="GO:0035329">
    <property type="term" value="P:hippo signaling"/>
    <property type="evidence" value="ECO:0000318"/>
    <property type="project" value="GO_Central"/>
</dbReference>
<dbReference type="GO" id="GO:0030334">
    <property type="term" value="P:regulation of cell migration"/>
    <property type="evidence" value="ECO:0000318"/>
    <property type="project" value="GO_Central"/>
</dbReference>
<dbReference type="GO" id="GO:0016055">
    <property type="term" value="P:Wnt signaling pathway"/>
    <property type="evidence" value="ECO:0007669"/>
    <property type="project" value="UniProtKB-KW"/>
</dbReference>
<dbReference type="InterPro" id="IPR009114">
    <property type="entry name" value="Angiomotin"/>
</dbReference>
<dbReference type="InterPro" id="IPR051747">
    <property type="entry name" value="Angiomotin-like"/>
</dbReference>
<dbReference type="InterPro" id="IPR024646">
    <property type="entry name" value="Angiomotin_C"/>
</dbReference>
<dbReference type="PANTHER" id="PTHR14826">
    <property type="entry name" value="ANGIOMOTIN"/>
    <property type="match status" value="1"/>
</dbReference>
<dbReference type="PANTHER" id="PTHR14826:SF12">
    <property type="entry name" value="ANGIOMOTIN-LIKE PROTEIN 1"/>
    <property type="match status" value="1"/>
</dbReference>
<dbReference type="Pfam" id="PF12240">
    <property type="entry name" value="Angiomotin_C"/>
    <property type="match status" value="1"/>
</dbReference>
<dbReference type="PRINTS" id="PR01807">
    <property type="entry name" value="ANGIOMOTIN"/>
</dbReference>
<name>AMOL1_HUMAN</name>
<gene>
    <name type="primary">AMOTL1</name>
</gene>
<proteinExistence type="evidence at protein level"/>
<accession>Q8IY63</accession>
<accession>Q63HK7</accession>
<accession>Q8NDN0</accession>
<accession>Q8TEN8</accession>
<accession>Q8WXD1</accession>
<accession>Q96CM5</accession>
<sequence>MWRAKLRRGTCEPAVKGSPSACYSPSSPVQVLEDSTYFSPDFQLYSGRHETSALTVEATSSIREKVVEDPLCNFHSPNFLRISEVEMRGSEDAAAGTVLQRLIQEQLRYGTPTENMNLLAIQHQATGSAGPAHPTNNFSSTENLTQEDPQMVYQSARQEPQGQEHQVDNTVMEKQVRSTQPQQNNEELPTYEEAKAQSQFFRGQQQQQQQQGAVGHGYYMAGGTSQKSRTEGRPTVNRANSGQAHKDEALKELKQGHVRSLSERIMQLSLERNGAKQHLPGSGNGKGFKVGGGPSPAQPAGKVLDPRGPPPEYPFKTKQMMSPVSKTQEHGLFYGDQHPGMLHEMVKPYPAPQPVRTDVAVLRYQPPPEYGVTSRPCQLPFPSTMQQHSPMSSQTSSASGPLHSVSLPLPLPMALGAPQPPPAASPSQQLGPDAFAIVERAQQMVEILTEENRVLHQELQGYYDNADKLHKFEKELQRISEAYESLVKSTTKRESLDKAMRNKLEGEIRRLHDFNRDLRDRLETANRQLSSREYEGHEDKAAEGHYASQNKEFLKEKEKLEMELAAVRTASEDHRRHIEILDQALSNAQARVIKLEEELREKQAYVEKVEKLQQALTQLQSACEKREQMERRLRTWLERELDALRTQQKHGNGQPANMPEYNAPALLELVREKEERILALEADMTKWEQKYLEESTIRHFAMNAAATAAAERDTTIINHSRNGSYGESSLEAHIWQEEEEVVQANRRCQDMEYTIKNLHAKIIEKDAMIKVLQQRSRKDAGKTDSSSLRPARSVPSIAAATGTHSRQTSLTSSQLAEEKKEEKTWKGSIGLLLGKEHHEHASAPLLPPPPTSALSSIASTTAASSAHAKTGSKDSSTQTDKSAELFWPSMASLPSRGRLSTTPAHSPVLKHPAAKGTAEKLENSPGHGKSPDHRGRVSSLLHKPEFPDGEMMEVLI</sequence>
<evidence type="ECO:0000250" key="1"/>
<evidence type="ECO:0000255" key="2"/>
<evidence type="ECO:0000256" key="3">
    <source>
        <dbReference type="SAM" id="MobiDB-lite"/>
    </source>
</evidence>
<evidence type="ECO:0000269" key="4">
    <source>
    </source>
</evidence>
<evidence type="ECO:0000269" key="5">
    <source>
    </source>
</evidence>
<evidence type="ECO:0000303" key="6">
    <source>
    </source>
</evidence>
<evidence type="ECO:0000305" key="7"/>
<evidence type="ECO:0007744" key="8">
    <source>
    </source>
</evidence>
<evidence type="ECO:0007744" key="9">
    <source>
    </source>
</evidence>
<evidence type="ECO:0007744" key="10">
    <source>
    </source>
</evidence>
<feature type="chain" id="PRO_0000190670" description="Angiomotin-like protein 1">
    <location>
        <begin position="1"/>
        <end position="956"/>
    </location>
</feature>
<feature type="region of interest" description="Disordered" evidence="3">
    <location>
        <begin position="197"/>
        <end position="246"/>
    </location>
</feature>
<feature type="region of interest" description="Disordered" evidence="3">
    <location>
        <begin position="274"/>
        <end position="322"/>
    </location>
</feature>
<feature type="region of interest" description="Disordered" evidence="3">
    <location>
        <begin position="382"/>
        <end position="405"/>
    </location>
</feature>
<feature type="region of interest" description="Disordered" evidence="3">
    <location>
        <begin position="411"/>
        <end position="430"/>
    </location>
</feature>
<feature type="region of interest" description="Disordered" evidence="3">
    <location>
        <begin position="773"/>
        <end position="823"/>
    </location>
</feature>
<feature type="region of interest" description="Disordered" evidence="3">
    <location>
        <begin position="841"/>
        <end position="880"/>
    </location>
</feature>
<feature type="region of interest" description="Disordered" evidence="3">
    <location>
        <begin position="894"/>
        <end position="944"/>
    </location>
</feature>
<feature type="coiled-coil region" evidence="2">
    <location>
        <begin position="259"/>
        <end position="279"/>
    </location>
</feature>
<feature type="coiled-coil region" evidence="2">
    <location>
        <begin position="438"/>
        <end position="639"/>
    </location>
</feature>
<feature type="coiled-coil region" evidence="2">
    <location>
        <begin position="665"/>
        <end position="694"/>
    </location>
</feature>
<feature type="coiled-coil region" evidence="2">
    <location>
        <begin position="729"/>
        <end position="762"/>
    </location>
</feature>
<feature type="short sequence motif" description="PDZ-binding">
    <location>
        <begin position="953"/>
        <end position="956"/>
    </location>
</feature>
<feature type="compositionally biased region" description="Gly residues" evidence="3">
    <location>
        <begin position="282"/>
        <end position="294"/>
    </location>
</feature>
<feature type="compositionally biased region" description="Polar residues" evidence="3">
    <location>
        <begin position="382"/>
        <end position="398"/>
    </location>
</feature>
<feature type="compositionally biased region" description="Polar residues" evidence="3">
    <location>
        <begin position="802"/>
        <end position="815"/>
    </location>
</feature>
<feature type="compositionally biased region" description="Low complexity" evidence="3">
    <location>
        <begin position="852"/>
        <end position="866"/>
    </location>
</feature>
<feature type="modified residue" description="Phosphoserine" evidence="8">
    <location>
        <position position="241"/>
    </location>
</feature>
<feature type="modified residue" description="Phosphoserine" evidence="9">
    <location>
        <position position="269"/>
    </location>
</feature>
<feature type="modified residue" description="Phosphoserine" evidence="8 9">
    <location>
        <position position="295"/>
    </location>
</feature>
<feature type="modified residue" description="Phosphoserine" evidence="8">
    <location>
        <position position="720"/>
    </location>
</feature>
<feature type="modified residue" description="Phosphoserine" evidence="9">
    <location>
        <position position="793"/>
    </location>
</feature>
<feature type="modified residue" description="Phosphoserine" evidence="9 10">
    <location>
        <position position="805"/>
    </location>
</feature>
<feature type="modified residue" description="Phosphoserine" evidence="9 10">
    <location>
        <position position="828"/>
    </location>
</feature>
<feature type="modified residue" description="Phosphoserine" evidence="9">
    <location>
        <position position="900"/>
    </location>
</feature>
<feature type="modified residue" description="Phosphothreonine" evidence="9">
    <location>
        <position position="902"/>
    </location>
</feature>
<feature type="modified residue" description="Phosphoserine" evidence="8 9 10">
    <location>
        <position position="906"/>
    </location>
</feature>
<feature type="splice variant" id="VSP_015710" description="In isoform 2." evidence="6">
    <location>
        <begin position="17"/>
        <end position="66"/>
    </location>
</feature>
<feature type="sequence variant" id="VAR_033498" description="In dbSNP:rs11020968.">
    <original>P</original>
    <variation>L</variation>
    <location>
        <position position="847"/>
    </location>
</feature>
<feature type="sequence conflict" description="In Ref. 4; AAH14126." evidence="7" ref="4">
    <original>LQ</original>
    <variation>HE</variation>
    <location>
        <begin position="459"/>
        <end position="460"/>
    </location>
</feature>
<feature type="sequence conflict" description="In Ref. 2; CAH56180." evidence="7" ref="2">
    <original>K</original>
    <variation>E</variation>
    <location>
        <position position="649"/>
    </location>
</feature>
<reference key="1">
    <citation type="submission" date="2002-01" db="EMBL/GenBank/DDBJ databases">
        <title>The nucleotide sequence of a long cDNA clone isolated from human spleen.</title>
        <authorList>
            <person name="Jikuya H."/>
            <person name="Takano J."/>
            <person name="Nomura N."/>
            <person name="Kikuno R."/>
            <person name="Nagase T."/>
            <person name="Ohara O."/>
        </authorList>
    </citation>
    <scope>NUCLEOTIDE SEQUENCE [MRNA] (ISOFORM 1)</scope>
    <source>
        <tissue>Spleen</tissue>
    </source>
</reference>
<reference key="2">
    <citation type="journal article" date="2007" name="BMC Genomics">
        <title>The full-ORF clone resource of the German cDNA consortium.</title>
        <authorList>
            <person name="Bechtel S."/>
            <person name="Rosenfelder H."/>
            <person name="Duda A."/>
            <person name="Schmidt C.P."/>
            <person name="Ernst U."/>
            <person name="Wellenreuther R."/>
            <person name="Mehrle A."/>
            <person name="Schuster C."/>
            <person name="Bahr A."/>
            <person name="Bloecker H."/>
            <person name="Heubner D."/>
            <person name="Hoerlein A."/>
            <person name="Michel G."/>
            <person name="Wedler H."/>
            <person name="Koehrer K."/>
            <person name="Ottenwaelder B."/>
            <person name="Poustka A."/>
            <person name="Wiemann S."/>
            <person name="Schupp I."/>
        </authorList>
    </citation>
    <scope>NUCLEOTIDE SEQUENCE [LARGE SCALE MRNA] (ISOFORM 2)</scope>
    <source>
        <tissue>Skeletal muscle</tissue>
        <tissue>Testis</tissue>
    </source>
</reference>
<reference key="3">
    <citation type="journal article" date="2006" name="Nature">
        <title>Human chromosome 11 DNA sequence and analysis including novel gene identification.</title>
        <authorList>
            <person name="Taylor T.D."/>
            <person name="Noguchi H."/>
            <person name="Totoki Y."/>
            <person name="Toyoda A."/>
            <person name="Kuroki Y."/>
            <person name="Dewar K."/>
            <person name="Lloyd C."/>
            <person name="Itoh T."/>
            <person name="Takeda T."/>
            <person name="Kim D.-W."/>
            <person name="She X."/>
            <person name="Barlow K.F."/>
            <person name="Bloom T."/>
            <person name="Bruford E."/>
            <person name="Chang J.L."/>
            <person name="Cuomo C.A."/>
            <person name="Eichler E."/>
            <person name="FitzGerald M.G."/>
            <person name="Jaffe D.B."/>
            <person name="LaButti K."/>
            <person name="Nicol R."/>
            <person name="Park H.-S."/>
            <person name="Seaman C."/>
            <person name="Sougnez C."/>
            <person name="Yang X."/>
            <person name="Zimmer A.R."/>
            <person name="Zody M.C."/>
            <person name="Birren B.W."/>
            <person name="Nusbaum C."/>
            <person name="Fujiyama A."/>
            <person name="Hattori M."/>
            <person name="Rogers J."/>
            <person name="Lander E.S."/>
            <person name="Sakaki Y."/>
        </authorList>
    </citation>
    <scope>NUCLEOTIDE SEQUENCE [LARGE SCALE GENOMIC DNA]</scope>
</reference>
<reference key="4">
    <citation type="journal article" date="2004" name="Genome Res.">
        <title>The status, quality, and expansion of the NIH full-length cDNA project: the Mammalian Gene Collection (MGC).</title>
        <authorList>
            <consortium name="The MGC Project Team"/>
        </authorList>
    </citation>
    <scope>NUCLEOTIDE SEQUENCE [LARGE SCALE MRNA] (ISOFORM 1)</scope>
    <source>
        <tissue>Muscle</tissue>
        <tissue>Skin</tissue>
    </source>
</reference>
<reference key="5">
    <citation type="journal article" date="2002" name="Gene">
        <title>Angiomotin belongs to a novel protein family with conserved coiled-coil and PDZ binding domains.</title>
        <authorList>
            <person name="Bratt A."/>
            <person name="Wilson W.J."/>
            <person name="Troyanovsky B."/>
            <person name="Aase K."/>
            <person name="Kessler R."/>
            <person name="Van Meir E.G."/>
            <person name="Holmgren L."/>
        </authorList>
    </citation>
    <scope>NUCLEOTIDE SEQUENCE [MRNA] OF 1-557 (ISOFORM 1)</scope>
    <source>
        <tissue>Brain</tissue>
    </source>
</reference>
<reference key="6">
    <citation type="journal article" date="2003" name="Gene">
        <authorList>
            <person name="Bratt A."/>
            <person name="Wilson W.J."/>
            <person name="Troyanovsky B."/>
            <person name="Aase K."/>
            <person name="Kessler R."/>
            <person name="Van Meir E.G."/>
            <person name="Holmgren L."/>
        </authorList>
    </citation>
    <scope>ERRATUM OF PUBMED:12406577</scope>
</reference>
<reference key="7">
    <citation type="journal article" date="2008" name="J. Proteome Res.">
        <title>Combining protein-based IMAC, peptide-based IMAC, and MudPIT for efficient phosphoproteomic analysis.</title>
        <authorList>
            <person name="Cantin G.T."/>
            <person name="Yi W."/>
            <person name="Lu B."/>
            <person name="Park S.K."/>
            <person name="Xu T."/>
            <person name="Lee J.-D."/>
            <person name="Yates J.R. III"/>
        </authorList>
    </citation>
    <scope>IDENTIFICATION BY MASS SPECTROMETRY [LARGE SCALE ANALYSIS]</scope>
    <source>
        <tissue>Cervix carcinoma</tissue>
    </source>
</reference>
<reference key="8">
    <citation type="journal article" date="2008" name="Proc. Natl. Acad. Sci. U.S.A.">
        <title>A quantitative atlas of mitotic phosphorylation.</title>
        <authorList>
            <person name="Dephoure N."/>
            <person name="Zhou C."/>
            <person name="Villen J."/>
            <person name="Beausoleil S.A."/>
            <person name="Bakalarski C.E."/>
            <person name="Elledge S.J."/>
            <person name="Gygi S.P."/>
        </authorList>
    </citation>
    <scope>IDENTIFICATION BY MASS SPECTROMETRY [LARGE SCALE ANALYSIS]</scope>
    <source>
        <tissue>Cervix carcinoma</tissue>
    </source>
</reference>
<reference key="9">
    <citation type="journal article" date="2010" name="Sci. Signal.">
        <title>Quantitative phosphoproteomics reveals widespread full phosphorylation site occupancy during mitosis.</title>
        <authorList>
            <person name="Olsen J.V."/>
            <person name="Vermeulen M."/>
            <person name="Santamaria A."/>
            <person name="Kumar C."/>
            <person name="Miller M.L."/>
            <person name="Jensen L.J."/>
            <person name="Gnad F."/>
            <person name="Cox J."/>
            <person name="Jensen T.S."/>
            <person name="Nigg E.A."/>
            <person name="Brunak S."/>
            <person name="Mann M."/>
        </authorList>
    </citation>
    <scope>PHOSPHORYLATION [LARGE SCALE ANALYSIS] AT SER-241; SER-295; SER-720 AND SER-906</scope>
    <scope>IDENTIFICATION BY MASS SPECTROMETRY [LARGE SCALE ANALYSIS]</scope>
    <source>
        <tissue>Cervix carcinoma</tissue>
    </source>
</reference>
<reference key="10">
    <citation type="journal article" date="2012" name="Biochem. J.">
        <title>The Nedd4-like ubiquitin E3 ligases target angiomotin/p130 to ubiquitin-dependent degradation.</title>
        <authorList>
            <person name="Wang C."/>
            <person name="An J."/>
            <person name="Zhang P."/>
            <person name="Xu C."/>
            <person name="Gao K."/>
            <person name="Wu D."/>
            <person name="Wang D."/>
            <person name="Yu H."/>
            <person name="Liu J.O."/>
            <person name="Yu L."/>
        </authorList>
    </citation>
    <scope>UBIQUITINATION BY NEDD4</scope>
</reference>
<reference key="11">
    <citation type="journal article" date="2012" name="J. Biol. Chem.">
        <title>The Amotl2 gene inhibits Wnt/beta-catenin signaling and regulates embryonic development in zebrafish.</title>
        <authorList>
            <person name="Li Z."/>
            <person name="Wang Y."/>
            <person name="Zhang M."/>
            <person name="Xu P."/>
            <person name="Huang H."/>
            <person name="Wu D."/>
            <person name="Meng A."/>
        </authorList>
    </citation>
    <scope>FUNCTION</scope>
</reference>
<reference key="12">
    <citation type="journal article" date="2013" name="J. Proteome Res.">
        <title>Toward a comprehensive characterization of a human cancer cell phosphoproteome.</title>
        <authorList>
            <person name="Zhou H."/>
            <person name="Di Palma S."/>
            <person name="Preisinger C."/>
            <person name="Peng M."/>
            <person name="Polat A.N."/>
            <person name="Heck A.J."/>
            <person name="Mohammed S."/>
        </authorList>
    </citation>
    <scope>PHOSPHORYLATION [LARGE SCALE ANALYSIS] AT SER-269; SER-295; SER-793; SER-805; SER-828; SER-900; THR-902 AND SER-906</scope>
    <scope>IDENTIFICATION BY MASS SPECTROMETRY [LARGE SCALE ANALYSIS]</scope>
    <source>
        <tissue>Cervix carcinoma</tissue>
        <tissue>Erythroleukemia</tissue>
    </source>
</reference>
<reference key="13">
    <citation type="journal article" date="2014" name="J. Proteomics">
        <title>An enzyme assisted RP-RPLC approach for in-depth analysis of human liver phosphoproteome.</title>
        <authorList>
            <person name="Bian Y."/>
            <person name="Song C."/>
            <person name="Cheng K."/>
            <person name="Dong M."/>
            <person name="Wang F."/>
            <person name="Huang J."/>
            <person name="Sun D."/>
            <person name="Wang L."/>
            <person name="Ye M."/>
            <person name="Zou H."/>
        </authorList>
    </citation>
    <scope>PHOSPHORYLATION [LARGE SCALE ANALYSIS] AT SER-805; SER-828 AND SER-906</scope>
    <scope>IDENTIFICATION BY MASS SPECTROMETRY [LARGE SCALE ANALYSIS]</scope>
    <source>
        <tissue>Liver</tissue>
    </source>
</reference>
<keyword id="KW-0025">Alternative splicing</keyword>
<keyword id="KW-0965">Cell junction</keyword>
<keyword id="KW-0175">Coiled coil</keyword>
<keyword id="KW-0597">Phosphoprotein</keyword>
<keyword id="KW-1267">Proteomics identification</keyword>
<keyword id="KW-1185">Reference proteome</keyword>
<keyword id="KW-0796">Tight junction</keyword>
<keyword id="KW-0832">Ubl conjugation</keyword>
<keyword id="KW-0879">Wnt signaling pathway</keyword>
<protein>
    <recommendedName>
        <fullName>Angiomotin-like protein 1</fullName>
    </recommendedName>
</protein>
<comment type="function">
    <text evidence="4">Inhibits the Wnt/beta-catenin signaling pathway, probably by recruiting CTNNB1 to recycling endosomes and hence preventing its translocation to the nucleus.</text>
</comment>
<comment type="subcellular location">
    <subcellularLocation>
        <location evidence="1">Cell junction</location>
        <location evidence="1">Tight junction</location>
    </subcellularLocation>
</comment>
<comment type="alternative products">
    <event type="alternative splicing"/>
    <isoform>
        <id>Q8IY63-1</id>
        <name>1</name>
        <sequence type="displayed"/>
    </isoform>
    <isoform>
        <id>Q8IY63-2</id>
        <name>2</name>
        <sequence type="described" ref="VSP_015710"/>
    </isoform>
</comment>
<comment type="PTM">
    <text evidence="5">Polyubiquitinated by NEDD4, leading to proteasomal degradation.</text>
</comment>
<comment type="similarity">
    <text evidence="7">Belongs to the angiomotin family.</text>
</comment>
<comment type="sequence caution" evidence="7">
    <conflict type="erroneous initiation">
        <sequence resource="EMBL-CDS" id="BAB84910"/>
    </conflict>
    <text>Extended N-terminus.</text>
</comment>
<comment type="sequence caution" evidence="7">
    <conflict type="frameshift">
        <sequence resource="EMBL-CDS" id="BAB84910"/>
    </conflict>
</comment>